<organism>
    <name type="scientific">Arabidopsis thaliana</name>
    <name type="common">Mouse-ear cress</name>
    <dbReference type="NCBI Taxonomy" id="3702"/>
    <lineage>
        <taxon>Eukaryota</taxon>
        <taxon>Viridiplantae</taxon>
        <taxon>Streptophyta</taxon>
        <taxon>Embryophyta</taxon>
        <taxon>Tracheophyta</taxon>
        <taxon>Spermatophyta</taxon>
        <taxon>Magnoliopsida</taxon>
        <taxon>eudicotyledons</taxon>
        <taxon>Gunneridae</taxon>
        <taxon>Pentapetalae</taxon>
        <taxon>rosids</taxon>
        <taxon>malvids</taxon>
        <taxon>Brassicales</taxon>
        <taxon>Brassicaceae</taxon>
        <taxon>Camelineae</taxon>
        <taxon>Arabidopsis</taxon>
    </lineage>
</organism>
<gene>
    <name evidence="12" type="primary">BZR2</name>
    <name evidence="13" type="synonym">BES1</name>
    <name evidence="14" type="synonym">BIS1</name>
    <name evidence="16" type="ordered locus">At1g19350</name>
    <name evidence="17" type="ORF">F18O14_4</name>
</gene>
<proteinExistence type="evidence at protein level"/>
<keyword id="KW-0025">Alternative splicing</keyword>
<keyword id="KW-1070">Brassinosteroid signaling pathway</keyword>
<keyword id="KW-0963">Cytoplasm</keyword>
<keyword id="KW-0238">DNA-binding</keyword>
<keyword id="KW-0539">Nucleus</keyword>
<keyword id="KW-0597">Phosphoprotein</keyword>
<keyword id="KW-1185">Reference proteome</keyword>
<keyword id="KW-0804">Transcription</keyword>
<keyword id="KW-0805">Transcription regulation</keyword>
<evidence type="ECO:0000250" key="1"/>
<evidence type="ECO:0000256" key="2">
    <source>
        <dbReference type="SAM" id="MobiDB-lite"/>
    </source>
</evidence>
<evidence type="ECO:0000269" key="3">
    <source>
    </source>
</evidence>
<evidence type="ECO:0000269" key="4">
    <source>
    </source>
</evidence>
<evidence type="ECO:0000269" key="5">
    <source>
    </source>
</evidence>
<evidence type="ECO:0000269" key="6">
    <source>
    </source>
</evidence>
<evidence type="ECO:0000269" key="7">
    <source>
    </source>
</evidence>
<evidence type="ECO:0000269" key="8">
    <source>
    </source>
</evidence>
<evidence type="ECO:0000269" key="9">
    <source>
    </source>
</evidence>
<evidence type="ECO:0000269" key="10">
    <source>
    </source>
</evidence>
<evidence type="ECO:0000269" key="11">
    <source>
    </source>
</evidence>
<evidence type="ECO:0000303" key="12">
    <source>
    </source>
</evidence>
<evidence type="ECO:0000303" key="13">
    <source>
    </source>
</evidence>
<evidence type="ECO:0000303" key="14">
    <source>
    </source>
</evidence>
<evidence type="ECO:0000305" key="15"/>
<evidence type="ECO:0000312" key="16">
    <source>
        <dbReference type="Araport" id="AT1G19350"/>
    </source>
</evidence>
<evidence type="ECO:0000312" key="17">
    <source>
        <dbReference type="EMBL" id="AAF79422.1"/>
    </source>
</evidence>
<evidence type="ECO:0007744" key="18">
    <source>
    </source>
</evidence>
<protein>
    <recommendedName>
        <fullName evidence="12">Protein BRASSINAZOLE-RESISTANT 2</fullName>
    </recommendedName>
    <alternativeName>
        <fullName>Protein 107</fullName>
    </alternativeName>
    <alternativeName>
        <fullName evidence="14">Protein BIN2 SUBSTRATE 1</fullName>
    </alternativeName>
    <alternativeName>
        <fullName evidence="13">Protein BRI1-EMS-SUPPRESSOR 1</fullName>
    </alternativeName>
</protein>
<sequence length="335" mass="36486">MTSDGATSTSAAAAAAAMATRRKPSWRERENNRRRERRRRAVAAKIYTGLRAQGNYNLPKHCDNNEVLKALCSEAGWVVEEDGTTYRKGHKPLPGDMAGSSSRATPYSSHNQSPLSSTFDSPILSYQVSPSSSSFPSPSRVGDPHNISTIFPFLRNGGIPSSLPPLRISNSAPVTPPVSSPTSRNPKPLPTWESFTKQSMSMAAKQSMTSLNYPFYAVSAPASPTHHRQFHAPATIPECDESDSSTVDSGHWISFQKFAQQQPFSASMVPTSPTFNLVKPAPQQLSPNTAAIQEIGQSSEFKFENSQVKPWEGERIHDVAMEDLELTLGNGKAHS</sequence>
<dbReference type="EMBL" id="AF134217">
    <property type="protein sequence ID" value="AAF22161.1"/>
    <property type="molecule type" value="mRNA"/>
</dbReference>
<dbReference type="EMBL" id="AC025808">
    <property type="protein sequence ID" value="AAF79422.1"/>
    <property type="molecule type" value="Genomic_DNA"/>
</dbReference>
<dbReference type="EMBL" id="CP002684">
    <property type="protein sequence ID" value="AEE29834.1"/>
    <property type="molecule type" value="Genomic_DNA"/>
</dbReference>
<dbReference type="EMBL" id="CP002684">
    <property type="protein sequence ID" value="AEE29836.1"/>
    <property type="molecule type" value="Genomic_DNA"/>
</dbReference>
<dbReference type="EMBL" id="CP002684">
    <property type="protein sequence ID" value="AEE29837.1"/>
    <property type="molecule type" value="Genomic_DNA"/>
</dbReference>
<dbReference type="EMBL" id="CP002684">
    <property type="protein sequence ID" value="AEE29838.1"/>
    <property type="molecule type" value="Genomic_DNA"/>
</dbReference>
<dbReference type="EMBL" id="AY065041">
    <property type="protein sequence ID" value="AAL57677.1"/>
    <property type="molecule type" value="mRNA"/>
</dbReference>
<dbReference type="EMBL" id="AF372937">
    <property type="protein sequence ID" value="AAK50077.1"/>
    <property type="status" value="ALT_INIT"/>
    <property type="molecule type" value="mRNA"/>
</dbReference>
<dbReference type="EMBL" id="AY074829">
    <property type="protein sequence ID" value="AAL69527.1"/>
    <property type="molecule type" value="mRNA"/>
</dbReference>
<dbReference type="EMBL" id="AY086340">
    <property type="protein sequence ID" value="AAM64408.1"/>
    <property type="molecule type" value="mRNA"/>
</dbReference>
<dbReference type="EMBL" id="BK000396">
    <property type="protein sequence ID" value="DAA00023.1"/>
    <property type="molecule type" value="mRNA"/>
</dbReference>
<dbReference type="PIR" id="G86326">
    <property type="entry name" value="G86326"/>
</dbReference>
<dbReference type="RefSeq" id="NP_001077562.1">
    <molecule id="Q9LN63-1"/>
    <property type="nucleotide sequence ID" value="NM_001084093.1"/>
</dbReference>
<dbReference type="RefSeq" id="NP_564081.1">
    <molecule id="Q9LN63-1"/>
    <property type="nucleotide sequence ID" value="NM_101792.4"/>
</dbReference>
<dbReference type="RefSeq" id="NP_973864.1">
    <molecule id="Q9LN63-1"/>
    <property type="nucleotide sequence ID" value="NM_202135.3"/>
</dbReference>
<dbReference type="RefSeq" id="NP_973865.1">
    <molecule id="Q9LN63-1"/>
    <property type="nucleotide sequence ID" value="NM_202136.1"/>
</dbReference>
<dbReference type="SMR" id="Q9LN63"/>
<dbReference type="BioGRID" id="23757">
    <property type="interactions" value="30"/>
</dbReference>
<dbReference type="DIP" id="DIP-34780N"/>
<dbReference type="FunCoup" id="Q9LN63">
    <property type="interactions" value="567"/>
</dbReference>
<dbReference type="IntAct" id="Q9LN63">
    <property type="interactions" value="23"/>
</dbReference>
<dbReference type="STRING" id="3702.Q9LN63"/>
<dbReference type="GlyGen" id="Q9LN63">
    <property type="glycosylation" value="1 site"/>
</dbReference>
<dbReference type="iPTMnet" id="Q9LN63"/>
<dbReference type="PaxDb" id="3702-AT1G19350.3"/>
<dbReference type="ProteomicsDB" id="222825">
    <molecule id="Q9LN63-1"/>
</dbReference>
<dbReference type="EnsemblPlants" id="AT1G19350.1">
    <molecule id="Q9LN63-1"/>
    <property type="protein sequence ID" value="AT1G19350.1"/>
    <property type="gene ID" value="AT1G19350"/>
</dbReference>
<dbReference type="EnsemblPlants" id="AT1G19350.4">
    <molecule id="Q9LN63-1"/>
    <property type="protein sequence ID" value="AT1G19350.4"/>
    <property type="gene ID" value="AT1G19350"/>
</dbReference>
<dbReference type="EnsemblPlants" id="AT1G19350.5">
    <molecule id="Q9LN63-1"/>
    <property type="protein sequence ID" value="AT1G19350.5"/>
    <property type="gene ID" value="AT1G19350"/>
</dbReference>
<dbReference type="EnsemblPlants" id="AT1G19350.6">
    <molecule id="Q9LN63-1"/>
    <property type="protein sequence ID" value="AT1G19350.6"/>
    <property type="gene ID" value="AT1G19350"/>
</dbReference>
<dbReference type="GeneID" id="838518"/>
<dbReference type="Gramene" id="AT1G19350.1">
    <molecule id="Q9LN63-1"/>
    <property type="protein sequence ID" value="AT1G19350.1"/>
    <property type="gene ID" value="AT1G19350"/>
</dbReference>
<dbReference type="Gramene" id="AT1G19350.4">
    <molecule id="Q9LN63-1"/>
    <property type="protein sequence ID" value="AT1G19350.4"/>
    <property type="gene ID" value="AT1G19350"/>
</dbReference>
<dbReference type="Gramene" id="AT1G19350.5">
    <molecule id="Q9LN63-1"/>
    <property type="protein sequence ID" value="AT1G19350.5"/>
    <property type="gene ID" value="AT1G19350"/>
</dbReference>
<dbReference type="Gramene" id="AT1G19350.6">
    <molecule id="Q9LN63-1"/>
    <property type="protein sequence ID" value="AT1G19350.6"/>
    <property type="gene ID" value="AT1G19350"/>
</dbReference>
<dbReference type="KEGG" id="ath:AT1G19350"/>
<dbReference type="Araport" id="AT1G19350"/>
<dbReference type="TAIR" id="AT1G19350">
    <property type="gene designation" value="BES1"/>
</dbReference>
<dbReference type="eggNOG" id="ENOG502QUKX">
    <property type="taxonomic scope" value="Eukaryota"/>
</dbReference>
<dbReference type="HOGENOM" id="CLU_036256_0_0_1"/>
<dbReference type="InParanoid" id="Q9LN63"/>
<dbReference type="PhylomeDB" id="Q9LN63"/>
<dbReference type="PRO" id="PR:Q9LN63"/>
<dbReference type="Proteomes" id="UP000006548">
    <property type="component" value="Chromosome 1"/>
</dbReference>
<dbReference type="ExpressionAtlas" id="Q9LN63">
    <property type="expression patterns" value="baseline and differential"/>
</dbReference>
<dbReference type="GO" id="GO:0005737">
    <property type="term" value="C:cytoplasm"/>
    <property type="evidence" value="ECO:0007669"/>
    <property type="project" value="UniProtKB-SubCell"/>
</dbReference>
<dbReference type="GO" id="GO:0005634">
    <property type="term" value="C:nucleus"/>
    <property type="evidence" value="ECO:0000314"/>
    <property type="project" value="UniProtKB"/>
</dbReference>
<dbReference type="GO" id="GO:0003677">
    <property type="term" value="F:DNA binding"/>
    <property type="evidence" value="ECO:0000314"/>
    <property type="project" value="UniProtKB"/>
</dbReference>
<dbReference type="GO" id="GO:0003700">
    <property type="term" value="F:DNA-binding transcription factor activity"/>
    <property type="evidence" value="ECO:0000314"/>
    <property type="project" value="UniProtKB"/>
</dbReference>
<dbReference type="GO" id="GO:0009742">
    <property type="term" value="P:brassinosteroid mediated signaling pathway"/>
    <property type="evidence" value="ECO:0000315"/>
    <property type="project" value="UniProtKB"/>
</dbReference>
<dbReference type="GO" id="GO:0071367">
    <property type="term" value="P:cellular response to brassinosteroid stimulus"/>
    <property type="evidence" value="ECO:0000315"/>
    <property type="project" value="UniProtKB"/>
</dbReference>
<dbReference type="GO" id="GO:0006351">
    <property type="term" value="P:DNA-templated transcription"/>
    <property type="evidence" value="ECO:0007669"/>
    <property type="project" value="InterPro"/>
</dbReference>
<dbReference type="GO" id="GO:1904961">
    <property type="term" value="P:quiescent center organization"/>
    <property type="evidence" value="ECO:0000315"/>
    <property type="project" value="UniProtKB"/>
</dbReference>
<dbReference type="InterPro" id="IPR008540">
    <property type="entry name" value="BES1_N"/>
</dbReference>
<dbReference type="InterPro" id="IPR033264">
    <property type="entry name" value="BZR"/>
</dbReference>
<dbReference type="PANTHER" id="PTHR31506">
    <property type="entry name" value="BES1/BZR1 HOMOLOG PROTEIN 3-RELATED"/>
    <property type="match status" value="1"/>
</dbReference>
<dbReference type="PANTHER" id="PTHR31506:SF22">
    <property type="entry name" value="PROTEIN BRASSINAZOLE-RESISTANT 2"/>
    <property type="match status" value="1"/>
</dbReference>
<dbReference type="Pfam" id="PF05687">
    <property type="entry name" value="BES1_N"/>
    <property type="match status" value="1"/>
</dbReference>
<feature type="chain" id="PRO_0000113272" description="Protein BRASSINAZOLE-RESISTANT 2">
    <location>
        <begin position="1"/>
        <end position="335"/>
    </location>
</feature>
<feature type="region of interest" description="Disordered" evidence="2">
    <location>
        <begin position="1"/>
        <end position="40"/>
    </location>
</feature>
<feature type="region of interest" description="Required for DNA-binding" evidence="1">
    <location>
        <begin position="22"/>
        <end position="103"/>
    </location>
</feature>
<feature type="region of interest" description="Disordered" evidence="2">
    <location>
        <begin position="85"/>
        <end position="122"/>
    </location>
</feature>
<feature type="region of interest" description="Disordered" evidence="2">
    <location>
        <begin position="164"/>
        <end position="190"/>
    </location>
</feature>
<feature type="region of interest" description="PEST-like">
    <location>
        <begin position="231"/>
        <end position="251"/>
    </location>
</feature>
<feature type="compositionally biased region" description="Low complexity" evidence="2">
    <location>
        <begin position="1"/>
        <end position="19"/>
    </location>
</feature>
<feature type="compositionally biased region" description="Polar residues" evidence="2">
    <location>
        <begin position="99"/>
        <end position="120"/>
    </location>
</feature>
<feature type="modified residue" description="Phosphothreonine" evidence="18">
    <location>
        <position position="175"/>
    </location>
</feature>
<feature type="mutagenesis site" description="In bes1-101/bes1-D; insensitive to brassinazole; increased stability of the protein but no effect on its phosphorylation.">
    <original>P</original>
    <variation>L</variation>
    <location>
        <position position="233"/>
    </location>
</feature>
<feature type="sequence conflict" description="In Ref. 5; AAM64408." evidence="15" ref="5">
    <original>P</original>
    <variation>S</variation>
    <location>
        <position position="186"/>
    </location>
</feature>
<feature type="sequence conflict" description="In Ref. 1; AAF22161." evidence="15" ref="1">
    <original>S</original>
    <variation>F</variation>
    <location>
        <position position="286"/>
    </location>
</feature>
<reference key="1">
    <citation type="submission" date="1999-03" db="EMBL/GenBank/DDBJ databases">
        <title>Molecular cloning and characterization of a gibberellin-responsive gene from Arabidopsis thaliana.</title>
        <authorList>
            <person name="Kwon H.-B."/>
        </authorList>
    </citation>
    <scope>NUCLEOTIDE SEQUENCE [MRNA]</scope>
    <source>
        <strain>cv. Columbia</strain>
    </source>
</reference>
<reference key="2">
    <citation type="journal article" date="2000" name="Nature">
        <title>Sequence and analysis of chromosome 1 of the plant Arabidopsis thaliana.</title>
        <authorList>
            <person name="Theologis A."/>
            <person name="Ecker J.R."/>
            <person name="Palm C.J."/>
            <person name="Federspiel N.A."/>
            <person name="Kaul S."/>
            <person name="White O."/>
            <person name="Alonso J."/>
            <person name="Altafi H."/>
            <person name="Araujo R."/>
            <person name="Bowman C.L."/>
            <person name="Brooks S.Y."/>
            <person name="Buehler E."/>
            <person name="Chan A."/>
            <person name="Chao Q."/>
            <person name="Chen H."/>
            <person name="Cheuk R.F."/>
            <person name="Chin C.W."/>
            <person name="Chung M.K."/>
            <person name="Conn L."/>
            <person name="Conway A.B."/>
            <person name="Conway A.R."/>
            <person name="Creasy T.H."/>
            <person name="Dewar K."/>
            <person name="Dunn P."/>
            <person name="Etgu P."/>
            <person name="Feldblyum T.V."/>
            <person name="Feng J.-D."/>
            <person name="Fong B."/>
            <person name="Fujii C.Y."/>
            <person name="Gill J.E."/>
            <person name="Goldsmith A.D."/>
            <person name="Haas B."/>
            <person name="Hansen N.F."/>
            <person name="Hughes B."/>
            <person name="Huizar L."/>
            <person name="Hunter J.L."/>
            <person name="Jenkins J."/>
            <person name="Johnson-Hopson C."/>
            <person name="Khan S."/>
            <person name="Khaykin E."/>
            <person name="Kim C.J."/>
            <person name="Koo H.L."/>
            <person name="Kremenetskaia I."/>
            <person name="Kurtz D.B."/>
            <person name="Kwan A."/>
            <person name="Lam B."/>
            <person name="Langin-Hooper S."/>
            <person name="Lee A."/>
            <person name="Lee J.M."/>
            <person name="Lenz C.A."/>
            <person name="Li J.H."/>
            <person name="Li Y.-P."/>
            <person name="Lin X."/>
            <person name="Liu S.X."/>
            <person name="Liu Z.A."/>
            <person name="Luros J.S."/>
            <person name="Maiti R."/>
            <person name="Marziali A."/>
            <person name="Militscher J."/>
            <person name="Miranda M."/>
            <person name="Nguyen M."/>
            <person name="Nierman W.C."/>
            <person name="Osborne B.I."/>
            <person name="Pai G."/>
            <person name="Peterson J."/>
            <person name="Pham P.K."/>
            <person name="Rizzo M."/>
            <person name="Rooney T."/>
            <person name="Rowley D."/>
            <person name="Sakano H."/>
            <person name="Salzberg S.L."/>
            <person name="Schwartz J.R."/>
            <person name="Shinn P."/>
            <person name="Southwick A.M."/>
            <person name="Sun H."/>
            <person name="Tallon L.J."/>
            <person name="Tambunga G."/>
            <person name="Toriumi M.J."/>
            <person name="Town C.D."/>
            <person name="Utterback T."/>
            <person name="Van Aken S."/>
            <person name="Vaysberg M."/>
            <person name="Vysotskaia V.S."/>
            <person name="Walker M."/>
            <person name="Wu D."/>
            <person name="Yu G."/>
            <person name="Fraser C.M."/>
            <person name="Venter J.C."/>
            <person name="Davis R.W."/>
        </authorList>
    </citation>
    <scope>NUCLEOTIDE SEQUENCE [LARGE SCALE GENOMIC DNA]</scope>
    <source>
        <strain>cv. Columbia</strain>
    </source>
</reference>
<reference key="3">
    <citation type="journal article" date="2017" name="Plant J.">
        <title>Araport11: a complete reannotation of the Arabidopsis thaliana reference genome.</title>
        <authorList>
            <person name="Cheng C.Y."/>
            <person name="Krishnakumar V."/>
            <person name="Chan A.P."/>
            <person name="Thibaud-Nissen F."/>
            <person name="Schobel S."/>
            <person name="Town C.D."/>
        </authorList>
    </citation>
    <scope>GENOME REANNOTATION</scope>
    <source>
        <strain>cv. Columbia</strain>
    </source>
</reference>
<reference key="4">
    <citation type="journal article" date="2003" name="Science">
        <title>Empirical analysis of transcriptional activity in the Arabidopsis genome.</title>
        <authorList>
            <person name="Yamada K."/>
            <person name="Lim J."/>
            <person name="Dale J.M."/>
            <person name="Chen H."/>
            <person name="Shinn P."/>
            <person name="Palm C.J."/>
            <person name="Southwick A.M."/>
            <person name="Wu H.C."/>
            <person name="Kim C.J."/>
            <person name="Nguyen M."/>
            <person name="Pham P.K."/>
            <person name="Cheuk R.F."/>
            <person name="Karlin-Newmann G."/>
            <person name="Liu S.X."/>
            <person name="Lam B."/>
            <person name="Sakano H."/>
            <person name="Wu T."/>
            <person name="Yu G."/>
            <person name="Miranda M."/>
            <person name="Quach H.L."/>
            <person name="Tripp M."/>
            <person name="Chang C.H."/>
            <person name="Lee J.M."/>
            <person name="Toriumi M.J."/>
            <person name="Chan M.M."/>
            <person name="Tang C.C."/>
            <person name="Onodera C.S."/>
            <person name="Deng J.M."/>
            <person name="Akiyama K."/>
            <person name="Ansari Y."/>
            <person name="Arakawa T."/>
            <person name="Banh J."/>
            <person name="Banno F."/>
            <person name="Bowser L."/>
            <person name="Brooks S.Y."/>
            <person name="Carninci P."/>
            <person name="Chao Q."/>
            <person name="Choy N."/>
            <person name="Enju A."/>
            <person name="Goldsmith A.D."/>
            <person name="Gurjal M."/>
            <person name="Hansen N.F."/>
            <person name="Hayashizaki Y."/>
            <person name="Johnson-Hopson C."/>
            <person name="Hsuan V.W."/>
            <person name="Iida K."/>
            <person name="Karnes M."/>
            <person name="Khan S."/>
            <person name="Koesema E."/>
            <person name="Ishida J."/>
            <person name="Jiang P.X."/>
            <person name="Jones T."/>
            <person name="Kawai J."/>
            <person name="Kamiya A."/>
            <person name="Meyers C."/>
            <person name="Nakajima M."/>
            <person name="Narusaka M."/>
            <person name="Seki M."/>
            <person name="Sakurai T."/>
            <person name="Satou M."/>
            <person name="Tamse R."/>
            <person name="Vaysberg M."/>
            <person name="Wallender E.K."/>
            <person name="Wong C."/>
            <person name="Yamamura Y."/>
            <person name="Yuan S."/>
            <person name="Shinozaki K."/>
            <person name="Davis R.W."/>
            <person name="Theologis A."/>
            <person name="Ecker J.R."/>
        </authorList>
    </citation>
    <scope>NUCLEOTIDE SEQUENCE [LARGE SCALE MRNA]</scope>
    <source>
        <strain>cv. Columbia</strain>
    </source>
</reference>
<reference key="5">
    <citation type="submission" date="2002-03" db="EMBL/GenBank/DDBJ databases">
        <title>Full-length cDNA from Arabidopsis thaliana.</title>
        <authorList>
            <person name="Brover V.V."/>
            <person name="Troukhan M.E."/>
            <person name="Alexandrov N.A."/>
            <person name="Lu Y.-P."/>
            <person name="Flavell R.B."/>
            <person name="Feldmann K.A."/>
        </authorList>
    </citation>
    <scope>NUCLEOTIDE SEQUENCE [LARGE SCALE MRNA]</scope>
</reference>
<reference key="6">
    <citation type="journal article" date="2002" name="Dev. Cell">
        <title>Nuclear-localized BZR1 mediates brassinosteroid-induced growth and feedback suppression of brassinosteroid biosynthesis.</title>
        <authorList>
            <person name="Wang Z.-Y."/>
            <person name="Nakano T."/>
            <person name="Gendron J."/>
            <person name="He J."/>
            <person name="Chen M."/>
            <person name="Vafeados D."/>
            <person name="Yang Y."/>
            <person name="Fujioka S."/>
            <person name="Yoshida S."/>
            <person name="Asami T."/>
            <person name="Chory J."/>
        </authorList>
    </citation>
    <scope>IDENTIFICATION</scope>
</reference>
<reference key="7">
    <citation type="journal article" date="2002" name="Cell">
        <title>BES1 accumulates in the nucleus in response to brassinosteroids to regulate gene expression and promote stem elongation.</title>
        <authorList>
            <person name="Yin Y."/>
            <person name="Wang Z.Y."/>
            <person name="Mora-Garcia S."/>
            <person name="Li J."/>
            <person name="Yoshida S."/>
            <person name="Asami T."/>
            <person name="Chory J."/>
        </authorList>
    </citation>
    <scope>FUNCTION</scope>
    <scope>TISSUE SPECIFICITY</scope>
    <scope>PHOSPHORYLATION</scope>
    <scope>SUBCELLULAR LOCATION</scope>
    <scope>MUTANT BES1-D</scope>
</reference>
<reference key="8">
    <citation type="journal article" date="2002" name="Plant Physiol.">
        <title>Two putative BIN2 substrates are nuclear components of brassinosteroid signaling.</title>
        <authorList>
            <person name="Zhao J."/>
            <person name="Peng P."/>
            <person name="Schmitz R.J."/>
            <person name="Decker A.D."/>
            <person name="Tax F.E."/>
            <person name="Li J."/>
        </authorList>
    </citation>
    <scope>PHOSPHORYLATION</scope>
    <scope>SUBCELLULAR LOCATION</scope>
    <scope>MUTANT BES1-101</scope>
    <scope>INTERACTION WITH ASK7/BIN2</scope>
</reference>
<reference key="9">
    <citation type="journal article" date="2005" name="Cell">
        <title>A new class of transcription factors mediates brassinosteroid-regulated gene expression in Arabidopsis.</title>
        <authorList>
            <person name="Yin Y."/>
            <person name="Vafeados D."/>
            <person name="Tao Y."/>
            <person name="Yoshida S."/>
            <person name="Asami T."/>
            <person name="Chory J."/>
        </authorList>
    </citation>
    <scope>FUNCTION</scope>
    <scope>DNA-BINDING</scope>
    <scope>INTERACTION WITH ASK7/BIN2; BIM1; BIM2 AND BIM3</scope>
</reference>
<reference key="10">
    <citation type="journal article" date="2008" name="Proc. Natl. Acad. Sci. U.S.A.">
        <title>Modulation of brassinosteroid-regulated gene expression by Jumonji domain-containing proteins ELF6 and REF6 in Arabidopsis.</title>
        <authorList>
            <person name="Yu X."/>
            <person name="Li L."/>
            <person name="Li L."/>
            <person name="Guo M."/>
            <person name="Chory J."/>
            <person name="Yin Y."/>
        </authorList>
    </citation>
    <scope>FUNCTION</scope>
    <scope>INTERACTION WITH ELF6 AND REF6</scope>
</reference>
<reference key="11">
    <citation type="journal article" date="2009" name="J. Proteomics">
        <title>Phosphoproteomic analysis of nuclei-enriched fractions from Arabidopsis thaliana.</title>
        <authorList>
            <person name="Jones A.M.E."/>
            <person name="MacLean D."/>
            <person name="Studholme D.J."/>
            <person name="Serna-Sanz A."/>
            <person name="Andreasson E."/>
            <person name="Rathjen J.P."/>
            <person name="Peck S.C."/>
        </authorList>
    </citation>
    <scope>PHOSPHORYLATION [LARGE SCALE ANALYSIS] AT THR-175</scope>
    <scope>IDENTIFICATION BY MASS SPECTROMETRY [LARGE SCALE ANALYSIS]</scope>
    <source>
        <strain>cv. Columbia</strain>
    </source>
</reference>
<reference key="12">
    <citation type="journal article" date="2009" name="Plant J.">
        <title>Arabidopsis MYB30 is a direct target of BES1 and cooperates with BES1 to regulate brassinosteroid-induced gene expression.</title>
        <authorList>
            <person name="Li L."/>
            <person name="Yu X."/>
            <person name="Thompson A."/>
            <person name="Guo M."/>
            <person name="Yoshida S."/>
            <person name="Asami T."/>
            <person name="Chory J."/>
            <person name="Yin Y."/>
        </authorList>
    </citation>
    <scope>FUNCTION</scope>
    <scope>INTERACTION WITH MYB30</scope>
    <scope>DOMAIN</scope>
</reference>
<reference key="13">
    <citation type="journal article" date="2009" name="Plant Physiol.">
        <title>Large-scale Arabidopsis phosphoproteome profiling reveals novel chloroplast kinase substrates and phosphorylation networks.</title>
        <authorList>
            <person name="Reiland S."/>
            <person name="Messerli G."/>
            <person name="Baerenfaller K."/>
            <person name="Gerrits B."/>
            <person name="Endler A."/>
            <person name="Grossmann J."/>
            <person name="Gruissem W."/>
            <person name="Baginsky S."/>
        </authorList>
    </citation>
    <scope>IDENTIFICATION BY MASS SPECTROMETRY [LARGE SCALE ANALYSIS]</scope>
</reference>
<reference key="14">
    <citation type="journal article" date="2010" name="Proc. Natl. Acad. Sci. U.S.A.">
        <title>Arabidopsis IWS1 interacts with transcription factor BES1 and is involved in plant steroid hormone brassinosteroid regulated gene expression.</title>
        <authorList>
            <person name="Li L."/>
            <person name="Ye H."/>
            <person name="Guo H."/>
            <person name="Yin Y."/>
        </authorList>
    </citation>
    <scope>FUNCTION</scope>
    <scope>INTERACTION WITH IWS1</scope>
</reference>
<reference key="15">
    <citation type="journal article" date="2014" name="Dev. Cell">
        <title>Regulation of plant stem cell quiescence by a brassinosteroid signaling module.</title>
        <authorList>
            <person name="Vilarrasa-Blasi J."/>
            <person name="Gonzalez-Garcia M.P."/>
            <person name="Frigola D."/>
            <person name="Fabregas N."/>
            <person name="Alexiou K.G."/>
            <person name="Lopez-Bigas N."/>
            <person name="Rivas S."/>
            <person name="Jauneau A."/>
            <person name="Lohmann J.U."/>
            <person name="Benfey P.N."/>
            <person name="Ibanes M."/>
            <person name="Cano-Delgado A.I."/>
        </authorList>
    </citation>
    <scope>FUNCTION</scope>
    <scope>DISRUPTION PHENOTYPE</scope>
    <scope>INTERACTION WITH MYB56</scope>
    <scope>SUBCELLULAR LOCATION</scope>
    <source>
        <strain>cv. Columbia</strain>
    </source>
</reference>
<reference key="16">
    <citation type="journal article" date="2014" name="Mol. Plant">
        <title>Histone lysine methyltransferase SDG8 is involved in brassinosteroid-regulated gene expression in Arabidopsis thaliana.</title>
        <authorList>
            <person name="Wang X."/>
            <person name="Chen J."/>
            <person name="Xie Z."/>
            <person name="Liu S."/>
            <person name="Nolan T."/>
            <person name="Ye H."/>
            <person name="Zhang M."/>
            <person name="Guo H."/>
            <person name="Schnable P.S."/>
            <person name="Li Z."/>
            <person name="Yin Y."/>
        </authorList>
    </citation>
    <scope>FUNCTION</scope>
    <scope>INTERACTION WITH ASHH2/SDG8</scope>
    <scope>SUBCELLULAR LOCATION</scope>
</reference>
<reference key="17">
    <citation type="journal article" date="2017" name="Plant Cell">
        <title>Arabidopsis WRKY46, WRKY54, and WRKY70 transcription factors are involved in brassinosteroid-regulated plant growth and drought responses.</title>
        <authorList>
            <person name="Chen J."/>
            <person name="Nolan T.M."/>
            <person name="Ye H."/>
            <person name="Zhang M."/>
            <person name="Tong H."/>
            <person name="Xin P."/>
            <person name="Chu J."/>
            <person name="Chu C."/>
            <person name="Li Z."/>
            <person name="Yin Y."/>
        </authorList>
    </citation>
    <scope>INTERACTION WITH WRKY46; WRKY54 AND WRKY70</scope>
    <source>
        <strain>cv. Columbia</strain>
    </source>
</reference>
<name>BZR2_ARATH</name>
<accession>Q9LN63</accession>
<accession>Q8LCX8</accession>
<accession>Q94JU1</accession>
<accession>Q9SEG5</accession>
<comment type="function">
    <text evidence="3 5 6 7 8 9 10">Positive regulator of brassinosteroid (BR) signaling. Transcription factor that activates target gene expression by binding specifically to the DNA sequence 5'-CANNTG-3'(E box) through its N-terminal domain. Can bind individually to the promoter as a homodimer or synergistically as a heterodimer with BIM1, BIM2 or BIM3. The C-terminal domain is probably involved in transcriptional activation (PubMed:12007405, PubMed:15680330, PubMed:18467490, PubMed:19170933). Recruits the transcription elongation factor IWS1 to control BR-regulated gene expression (PubMed:20139304). Forms a trimeric complex with IWS1 and ASHH2/SDG8 to regulate BR-regulated gene expression (PubMed:24838002). Promotes quiescent center (QC) self-renewal by cell divisions in the primary root. Binds to the E-boxes of the BRAVO promoter to repress its expression (PubMed:24981610).</text>
</comment>
<comment type="subunit">
    <text evidence="4 5 6 7 8 9 10 11">Interacts with ASK7/BIN2 through its C-terminal domain and with the bHLH transcription factors BIM1, BIM2 and BIM3 through its C- and N-terminal domains. Interacts (via N-terminus) with REF6 and ELF6 (PubMed:12427989, PubMed:15680330, PubMed:18467490). Interacts with MYB30 (PubMed:19170933). Interacts with IWS1 (PubMed:20139304). Interacts with ASHH2/SDG8 (PubMed:24838002). Binds to MYB56 when dephosphorylated in the nucleus of quiescent center (QC) cells (PubMed:24981610). Binds to WRKY46, WRKY54 and WRKY70 to cooperatively regulate the expression of target genes (PubMed:28576847).</text>
</comment>
<comment type="interaction">
    <interactant intactId="EBI-617078">
        <id>Q9LN63</id>
    </interactant>
    <interactant intactId="EBI-1798250">
        <id>Q39011</id>
        <label>ASK7</label>
    </interactant>
    <organismsDiffer>false</organismsDiffer>
    <experiments>2</experiments>
</comment>
<comment type="interaction">
    <interactant intactId="EBI-617078">
        <id>Q9LN63</id>
    </interactant>
    <interactant intactId="EBI-617095">
        <id>Q9LEZ3</id>
        <label>BIM1</label>
    </interactant>
    <organismsDiffer>false</organismsDiffer>
    <experiments>2</experiments>
</comment>
<comment type="interaction">
    <interactant intactId="EBI-617078">
        <id>Q9LN63</id>
    </interactant>
    <interactant intactId="EBI-1798417">
        <id>Q6BDA0</id>
        <label>ELF6</label>
    </interactant>
    <organismsDiffer>false</organismsDiffer>
    <experiments>3</experiments>
</comment>
<comment type="interaction">
    <interactant intactId="EBI-617078">
        <id>Q9LN63</id>
    </interactant>
    <interactant intactId="EBI-15834301">
        <id>O49413</id>
        <label>IWS2</label>
    </interactant>
    <organismsDiffer>false</organismsDiffer>
    <experiments>3</experiments>
</comment>
<comment type="interaction">
    <interactant intactId="EBI-617078">
        <id>Q9LN63</id>
    </interactant>
    <interactant intactId="EBI-1546577">
        <id>Q9C9A5</id>
        <label>MYBL2</label>
    </interactant>
    <organismsDiffer>false</organismsDiffer>
    <experiments>5</experiments>
</comment>
<comment type="interaction">
    <interactant intactId="EBI-617078">
        <id>Q9LN63</id>
    </interactant>
    <interactant intactId="EBI-1798387">
        <id>Q9STM3</id>
        <label>REF6</label>
    </interactant>
    <organismsDiffer>false</organismsDiffer>
    <experiments>2</experiments>
</comment>
<comment type="subcellular location">
    <subcellularLocation>
        <location evidence="3 4 9 10">Nucleus</location>
    </subcellularLocation>
    <subcellularLocation>
        <location evidence="3">Cytoplasm</location>
    </subcellularLocation>
    <text evidence="3">Brassinosteroid treatment triggers nuclear accumulation.</text>
</comment>
<comment type="alternative products">
    <event type="alternative splicing"/>
    <isoform>
        <id>Q9LN63-1</id>
        <name>1</name>
        <sequence type="displayed"/>
    </isoform>
    <text>A number of isoforms are produced. According to EST sequences.</text>
</comment>
<comment type="tissue specificity">
    <text evidence="3">Ubiquitously expressed in cotyledons, leaves, hypocotyls and roots.</text>
</comment>
<comment type="domain">
    <text evidence="7">The central part (140-272) is important for interaction with MYB30.</text>
</comment>
<comment type="PTM">
    <text evidence="3 4">Phosphorylated by ASK7/BIN2. Phosphorylation increases protein degradation and/or interferes with the nuclear localization.</text>
</comment>
<comment type="disruption phenotype">
    <text evidence="10">Reduced brassinosteroid (BR)-mediated quiescent center (QC) cells division.</text>
</comment>
<comment type="similarity">
    <text evidence="15">Belongs to the BZR/LAT61 family.</text>
</comment>
<comment type="sequence caution" evidence="15">
    <conflict type="erroneous initiation">
        <sequence resource="EMBL-CDS" id="AAK50077"/>
    </conflict>
    <text>Truncated N-terminus.</text>
</comment>